<comment type="function">
    <text evidence="1">Single strand-specific metallo-endoribonuclease involved in late-stage 70S ribosome quality control and in maturation of the 3' terminus of the 16S rRNA.</text>
</comment>
<comment type="cofactor">
    <cofactor evidence="1">
        <name>Zn(2+)</name>
        <dbReference type="ChEBI" id="CHEBI:29105"/>
    </cofactor>
    <text evidence="1">Binds 1 zinc ion.</text>
</comment>
<comment type="subcellular location">
    <subcellularLocation>
        <location evidence="1">Cytoplasm</location>
    </subcellularLocation>
</comment>
<comment type="similarity">
    <text evidence="1">Belongs to the endoribonuclease YbeY family.</text>
</comment>
<proteinExistence type="inferred from homology"/>
<feature type="chain" id="PRO_0000284218" description="Endoribonuclease YbeY">
    <location>
        <begin position="1"/>
        <end position="154"/>
    </location>
</feature>
<feature type="binding site" evidence="1">
    <location>
        <position position="115"/>
    </location>
    <ligand>
        <name>Zn(2+)</name>
        <dbReference type="ChEBI" id="CHEBI:29105"/>
        <note>catalytic</note>
    </ligand>
</feature>
<feature type="binding site" evidence="1">
    <location>
        <position position="119"/>
    </location>
    <ligand>
        <name>Zn(2+)</name>
        <dbReference type="ChEBI" id="CHEBI:29105"/>
        <note>catalytic</note>
    </ligand>
</feature>
<feature type="binding site" evidence="1">
    <location>
        <position position="125"/>
    </location>
    <ligand>
        <name>Zn(2+)</name>
        <dbReference type="ChEBI" id="CHEBI:29105"/>
        <note>catalytic</note>
    </ligand>
</feature>
<sequence length="154" mass="16945">MSELELAFQHVAGASAPEAERVQAWLEPVFEAHGRGGELTVRIVDEDESRALNRDYRGRDKPTNVLSFPCELPPGLPAEAAQILGDLVVCAPVVAREAAEQGKPEADHWAHMLVHGALHLLGYDHEDPAQAERMEAEERRILAALGVPDPYQER</sequence>
<evidence type="ECO:0000255" key="1">
    <source>
        <dbReference type="HAMAP-Rule" id="MF_00009"/>
    </source>
</evidence>
<reference key="1">
    <citation type="submission" date="2006-12" db="EMBL/GenBank/DDBJ databases">
        <title>Complete sequence of Halorhodospira halophila SL1.</title>
        <authorList>
            <consortium name="US DOE Joint Genome Institute"/>
            <person name="Copeland A."/>
            <person name="Lucas S."/>
            <person name="Lapidus A."/>
            <person name="Barry K."/>
            <person name="Detter J.C."/>
            <person name="Glavina del Rio T."/>
            <person name="Hammon N."/>
            <person name="Israni S."/>
            <person name="Dalin E."/>
            <person name="Tice H."/>
            <person name="Pitluck S."/>
            <person name="Saunders E."/>
            <person name="Brettin T."/>
            <person name="Bruce D."/>
            <person name="Han C."/>
            <person name="Tapia R."/>
            <person name="Schmutz J."/>
            <person name="Larimer F."/>
            <person name="Land M."/>
            <person name="Hauser L."/>
            <person name="Kyrpides N."/>
            <person name="Mikhailova N."/>
            <person name="Hoff W."/>
            <person name="Richardson P."/>
        </authorList>
    </citation>
    <scope>NUCLEOTIDE SEQUENCE [LARGE SCALE GENOMIC DNA]</scope>
    <source>
        <strain>DSM 244 / SL1</strain>
    </source>
</reference>
<name>YBEY_HALHL</name>
<dbReference type="EC" id="3.1.-.-" evidence="1"/>
<dbReference type="EMBL" id="CP000544">
    <property type="protein sequence ID" value="ABM61667.1"/>
    <property type="molecule type" value="Genomic_DNA"/>
</dbReference>
<dbReference type="RefSeq" id="WP_011813690.1">
    <property type="nucleotide sequence ID" value="NC_008789.1"/>
</dbReference>
<dbReference type="SMR" id="A1WVF5"/>
<dbReference type="STRING" id="349124.Hhal_0891"/>
<dbReference type="KEGG" id="hha:Hhal_0891"/>
<dbReference type="eggNOG" id="COG0319">
    <property type="taxonomic scope" value="Bacteria"/>
</dbReference>
<dbReference type="HOGENOM" id="CLU_106710_0_1_6"/>
<dbReference type="OrthoDB" id="9807740at2"/>
<dbReference type="Proteomes" id="UP000000647">
    <property type="component" value="Chromosome"/>
</dbReference>
<dbReference type="GO" id="GO:0005737">
    <property type="term" value="C:cytoplasm"/>
    <property type="evidence" value="ECO:0007669"/>
    <property type="project" value="UniProtKB-SubCell"/>
</dbReference>
<dbReference type="GO" id="GO:0004222">
    <property type="term" value="F:metalloendopeptidase activity"/>
    <property type="evidence" value="ECO:0007669"/>
    <property type="project" value="InterPro"/>
</dbReference>
<dbReference type="GO" id="GO:0004521">
    <property type="term" value="F:RNA endonuclease activity"/>
    <property type="evidence" value="ECO:0007669"/>
    <property type="project" value="UniProtKB-UniRule"/>
</dbReference>
<dbReference type="GO" id="GO:0008270">
    <property type="term" value="F:zinc ion binding"/>
    <property type="evidence" value="ECO:0007669"/>
    <property type="project" value="UniProtKB-UniRule"/>
</dbReference>
<dbReference type="GO" id="GO:0006364">
    <property type="term" value="P:rRNA processing"/>
    <property type="evidence" value="ECO:0007669"/>
    <property type="project" value="UniProtKB-UniRule"/>
</dbReference>
<dbReference type="Gene3D" id="3.40.390.30">
    <property type="entry name" value="Metalloproteases ('zincins'), catalytic domain"/>
    <property type="match status" value="1"/>
</dbReference>
<dbReference type="HAMAP" id="MF_00009">
    <property type="entry name" value="Endoribonucl_YbeY"/>
    <property type="match status" value="1"/>
</dbReference>
<dbReference type="InterPro" id="IPR023091">
    <property type="entry name" value="MetalPrtase_cat_dom_sf_prd"/>
</dbReference>
<dbReference type="InterPro" id="IPR002036">
    <property type="entry name" value="YbeY"/>
</dbReference>
<dbReference type="InterPro" id="IPR020549">
    <property type="entry name" value="YbeY_CS"/>
</dbReference>
<dbReference type="NCBIfam" id="TIGR00043">
    <property type="entry name" value="rRNA maturation RNase YbeY"/>
    <property type="match status" value="1"/>
</dbReference>
<dbReference type="PANTHER" id="PTHR46986">
    <property type="entry name" value="ENDORIBONUCLEASE YBEY, CHLOROPLASTIC"/>
    <property type="match status" value="1"/>
</dbReference>
<dbReference type="PANTHER" id="PTHR46986:SF1">
    <property type="entry name" value="ENDORIBONUCLEASE YBEY, CHLOROPLASTIC"/>
    <property type="match status" value="1"/>
</dbReference>
<dbReference type="Pfam" id="PF02130">
    <property type="entry name" value="YbeY"/>
    <property type="match status" value="1"/>
</dbReference>
<dbReference type="SUPFAM" id="SSF55486">
    <property type="entry name" value="Metalloproteases ('zincins'), catalytic domain"/>
    <property type="match status" value="1"/>
</dbReference>
<dbReference type="PROSITE" id="PS01306">
    <property type="entry name" value="UPF0054"/>
    <property type="match status" value="1"/>
</dbReference>
<accession>A1WVF5</accession>
<protein>
    <recommendedName>
        <fullName evidence="1">Endoribonuclease YbeY</fullName>
        <ecNumber evidence="1">3.1.-.-</ecNumber>
    </recommendedName>
</protein>
<keyword id="KW-0963">Cytoplasm</keyword>
<keyword id="KW-0255">Endonuclease</keyword>
<keyword id="KW-0378">Hydrolase</keyword>
<keyword id="KW-0479">Metal-binding</keyword>
<keyword id="KW-0540">Nuclease</keyword>
<keyword id="KW-1185">Reference proteome</keyword>
<keyword id="KW-0690">Ribosome biogenesis</keyword>
<keyword id="KW-0698">rRNA processing</keyword>
<keyword id="KW-0862">Zinc</keyword>
<gene>
    <name evidence="1" type="primary">ybeY</name>
    <name type="ordered locus">Hhal_0891</name>
</gene>
<organism>
    <name type="scientific">Halorhodospira halophila (strain DSM 244 / SL1)</name>
    <name type="common">Ectothiorhodospira halophila (strain DSM 244 / SL1)</name>
    <dbReference type="NCBI Taxonomy" id="349124"/>
    <lineage>
        <taxon>Bacteria</taxon>
        <taxon>Pseudomonadati</taxon>
        <taxon>Pseudomonadota</taxon>
        <taxon>Gammaproteobacteria</taxon>
        <taxon>Chromatiales</taxon>
        <taxon>Ectothiorhodospiraceae</taxon>
        <taxon>Halorhodospira</taxon>
    </lineage>
</organism>